<protein>
    <recommendedName>
        <fullName>Rab GTPase-binding effector protein 1</fullName>
    </recommendedName>
    <alternativeName>
        <fullName>Rabaptin-5</fullName>
    </alternativeName>
    <alternativeName>
        <fullName>Rabaptin-5alpha</fullName>
    </alternativeName>
</protein>
<sequence length="862" mass="99524">MAQPGPAPQPDVSLQQRVAELEKINAEFLRAQQQLEQEFNQKRAKFKELYLAKEEDLKRQNAVLQAAQDDLGHLRTQLWEAQAEMENIKAIATVSENTKQEAIDEVKRQWREEVASLQAIMKETVRDYEHQFHLRLEQERAQWAQYRESAEREIADLRRRLSEGQEEENLENEMKKAQEDAEKLRSVVMPMEKEIAALKDKLTEAEDKIKELEASKVKELNHYLEAEKSCRTDLEMYVAVLNTQKSVLQEDAEKLRKELHEVCHLLEQERQQHNQLKHTWQKANDQFLESQRLLMRDMQRMEIVLTSEQLRQVEELKKKDQEEDEQQRVNKRKDNKKTDTEEEVKIPVVCALTQEESSTPLSNEEEHLDSTHGSVHSLDADLMLPSGDPFSKSDNDMFKDGLRRAQSTDSLGTSSSLQSKALGYNYKAKSAGNLDESDFGPLVGADSVSENFDTVSLGSLQMPSGFMLTKDQERAIKAMTPEQEETASLLSSVTQGMESAYVSPSGYRLVSETEWNLLQKEVHNAGNKLGRRCDMCSNYEKQLQGIQIQEAETRDQVKKLQLMLRQANDQLEKTMKEKQELEDFLKQSAEDSSHQISALVLRAQASEVLLEELQQSFSQAKRDVQEQMAVLMQSREQVSEELVRLQKDNDSLQGKHSLHVSLQLAEDFILPDTVEVLRELVLKYRENIVHVRTAADHMEEKLKAEILFLKEQIQAEQCLKENLEETLQLEIENCKEEIASISSLKAELERIKVEKGQLESTLREKSQQLESLQEMKVNLEEQLKKETAAKATVEQLMFEEKNKAQRLQTELDVSEQVQRDFVKLSQTLQVQLERIRQADSLERIRAILNDTKLTDINQLPET</sequence>
<reference key="1">
    <citation type="journal article" date="1997" name="NeuroReport">
        <title>Neurocrescin: a novel neurite-outgrowth factor secreted by muscle after denervation.</title>
        <authorList>
            <person name="Nishimune H."/>
            <person name="Uyeda A."/>
            <person name="Nogawa M."/>
            <person name="Fujimori K."/>
            <person name="Taguchi T."/>
        </authorList>
    </citation>
    <scope>NUCLEOTIDE SEQUENCE [MRNA] (ISOFORM 1)</scope>
    <source>
        <strain>ICR</strain>
        <tissue>Brain</tissue>
        <tissue>Muscle</tissue>
    </source>
</reference>
<reference key="2">
    <citation type="journal article" date="2000" name="Dokl. Biochem.">
        <title>Identification of a new alternative-splicing transcript of rabaptin-5 interacting with protein kinase MAK-V.</title>
        <authorList>
            <person name="Korobko E.V."/>
            <person name="Smirnova E.V."/>
            <person name="Kiselev S.L."/>
            <person name="Georgiev G.P."/>
            <person name="Korobko I.V."/>
        </authorList>
    </citation>
    <scope>NUCLEOTIDE SEQUENCE [MRNA] (ISOFORMS 2 AND 3)</scope>
    <source>
        <strain>CBA/J</strain>
        <tissue>Embryo</tissue>
    </source>
</reference>
<reference key="3">
    <citation type="journal article" date="2009" name="PLoS Biol.">
        <title>Lineage-specific biology revealed by a finished genome assembly of the mouse.</title>
        <authorList>
            <person name="Church D.M."/>
            <person name="Goodstadt L."/>
            <person name="Hillier L.W."/>
            <person name="Zody M.C."/>
            <person name="Goldstein S."/>
            <person name="She X."/>
            <person name="Bult C.J."/>
            <person name="Agarwala R."/>
            <person name="Cherry J.L."/>
            <person name="DiCuccio M."/>
            <person name="Hlavina W."/>
            <person name="Kapustin Y."/>
            <person name="Meric P."/>
            <person name="Maglott D."/>
            <person name="Birtle Z."/>
            <person name="Marques A.C."/>
            <person name="Graves T."/>
            <person name="Zhou S."/>
            <person name="Teague B."/>
            <person name="Potamousis K."/>
            <person name="Churas C."/>
            <person name="Place M."/>
            <person name="Herschleb J."/>
            <person name="Runnheim R."/>
            <person name="Forrest D."/>
            <person name="Amos-Landgraf J."/>
            <person name="Schwartz D.C."/>
            <person name="Cheng Z."/>
            <person name="Lindblad-Toh K."/>
            <person name="Eichler E.E."/>
            <person name="Ponting C.P."/>
        </authorList>
    </citation>
    <scope>NUCLEOTIDE SEQUENCE [LARGE SCALE GENOMIC DNA]</scope>
    <source>
        <strain>C57BL/6J</strain>
    </source>
</reference>
<reference key="4">
    <citation type="submission" date="2005-07" db="EMBL/GenBank/DDBJ databases">
        <authorList>
            <person name="Mural R.J."/>
            <person name="Adams M.D."/>
            <person name="Myers E.W."/>
            <person name="Smith H.O."/>
            <person name="Venter J.C."/>
        </authorList>
    </citation>
    <scope>NUCLEOTIDE SEQUENCE [LARGE SCALE GENOMIC DNA]</scope>
</reference>
<reference key="5">
    <citation type="journal article" date="2004" name="Genome Res.">
        <title>The status, quality, and expansion of the NIH full-length cDNA project: the Mammalian Gene Collection (MGC).</title>
        <authorList>
            <consortium name="The MGC Project Team"/>
        </authorList>
    </citation>
    <scope>NUCLEOTIDE SEQUENCE [LARGE SCALE MRNA] (ISOFORMS 4; 5 AND 6)</scope>
    <source>
        <strain>C57BL/6J</strain>
        <tissue>Brain</tissue>
        <tissue>Mammary gland</tissue>
    </source>
</reference>
<reference key="6">
    <citation type="journal article" date="2005" name="Science">
        <title>The transcriptional landscape of the mammalian genome.</title>
        <authorList>
            <person name="Carninci P."/>
            <person name="Kasukawa T."/>
            <person name="Katayama S."/>
            <person name="Gough J."/>
            <person name="Frith M.C."/>
            <person name="Maeda N."/>
            <person name="Oyama R."/>
            <person name="Ravasi T."/>
            <person name="Lenhard B."/>
            <person name="Wells C."/>
            <person name="Kodzius R."/>
            <person name="Shimokawa K."/>
            <person name="Bajic V.B."/>
            <person name="Brenner S.E."/>
            <person name="Batalov S."/>
            <person name="Forrest A.R."/>
            <person name="Zavolan M."/>
            <person name="Davis M.J."/>
            <person name="Wilming L.G."/>
            <person name="Aidinis V."/>
            <person name="Allen J.E."/>
            <person name="Ambesi-Impiombato A."/>
            <person name="Apweiler R."/>
            <person name="Aturaliya R.N."/>
            <person name="Bailey T.L."/>
            <person name="Bansal M."/>
            <person name="Baxter L."/>
            <person name="Beisel K.W."/>
            <person name="Bersano T."/>
            <person name="Bono H."/>
            <person name="Chalk A.M."/>
            <person name="Chiu K.P."/>
            <person name="Choudhary V."/>
            <person name="Christoffels A."/>
            <person name="Clutterbuck D.R."/>
            <person name="Crowe M.L."/>
            <person name="Dalla E."/>
            <person name="Dalrymple B.P."/>
            <person name="de Bono B."/>
            <person name="Della Gatta G."/>
            <person name="di Bernardo D."/>
            <person name="Down T."/>
            <person name="Engstrom P."/>
            <person name="Fagiolini M."/>
            <person name="Faulkner G."/>
            <person name="Fletcher C.F."/>
            <person name="Fukushima T."/>
            <person name="Furuno M."/>
            <person name="Futaki S."/>
            <person name="Gariboldi M."/>
            <person name="Georgii-Hemming P."/>
            <person name="Gingeras T.R."/>
            <person name="Gojobori T."/>
            <person name="Green R.E."/>
            <person name="Gustincich S."/>
            <person name="Harbers M."/>
            <person name="Hayashi Y."/>
            <person name="Hensch T.K."/>
            <person name="Hirokawa N."/>
            <person name="Hill D."/>
            <person name="Huminiecki L."/>
            <person name="Iacono M."/>
            <person name="Ikeo K."/>
            <person name="Iwama A."/>
            <person name="Ishikawa T."/>
            <person name="Jakt M."/>
            <person name="Kanapin A."/>
            <person name="Katoh M."/>
            <person name="Kawasawa Y."/>
            <person name="Kelso J."/>
            <person name="Kitamura H."/>
            <person name="Kitano H."/>
            <person name="Kollias G."/>
            <person name="Krishnan S.P."/>
            <person name="Kruger A."/>
            <person name="Kummerfeld S.K."/>
            <person name="Kurochkin I.V."/>
            <person name="Lareau L.F."/>
            <person name="Lazarevic D."/>
            <person name="Lipovich L."/>
            <person name="Liu J."/>
            <person name="Liuni S."/>
            <person name="McWilliam S."/>
            <person name="Madan Babu M."/>
            <person name="Madera M."/>
            <person name="Marchionni L."/>
            <person name="Matsuda H."/>
            <person name="Matsuzawa S."/>
            <person name="Miki H."/>
            <person name="Mignone F."/>
            <person name="Miyake S."/>
            <person name="Morris K."/>
            <person name="Mottagui-Tabar S."/>
            <person name="Mulder N."/>
            <person name="Nakano N."/>
            <person name="Nakauchi H."/>
            <person name="Ng P."/>
            <person name="Nilsson R."/>
            <person name="Nishiguchi S."/>
            <person name="Nishikawa S."/>
            <person name="Nori F."/>
            <person name="Ohara O."/>
            <person name="Okazaki Y."/>
            <person name="Orlando V."/>
            <person name="Pang K.C."/>
            <person name="Pavan W.J."/>
            <person name="Pavesi G."/>
            <person name="Pesole G."/>
            <person name="Petrovsky N."/>
            <person name="Piazza S."/>
            <person name="Reed J."/>
            <person name="Reid J.F."/>
            <person name="Ring B.Z."/>
            <person name="Ringwald M."/>
            <person name="Rost B."/>
            <person name="Ruan Y."/>
            <person name="Salzberg S.L."/>
            <person name="Sandelin A."/>
            <person name="Schneider C."/>
            <person name="Schoenbach C."/>
            <person name="Sekiguchi K."/>
            <person name="Semple C.A."/>
            <person name="Seno S."/>
            <person name="Sessa L."/>
            <person name="Sheng Y."/>
            <person name="Shibata Y."/>
            <person name="Shimada H."/>
            <person name="Shimada K."/>
            <person name="Silva D."/>
            <person name="Sinclair B."/>
            <person name="Sperling S."/>
            <person name="Stupka E."/>
            <person name="Sugiura K."/>
            <person name="Sultana R."/>
            <person name="Takenaka Y."/>
            <person name="Taki K."/>
            <person name="Tammoja K."/>
            <person name="Tan S.L."/>
            <person name="Tang S."/>
            <person name="Taylor M.S."/>
            <person name="Tegner J."/>
            <person name="Teichmann S.A."/>
            <person name="Ueda H.R."/>
            <person name="van Nimwegen E."/>
            <person name="Verardo R."/>
            <person name="Wei C.L."/>
            <person name="Yagi K."/>
            <person name="Yamanishi H."/>
            <person name="Zabarovsky E."/>
            <person name="Zhu S."/>
            <person name="Zimmer A."/>
            <person name="Hide W."/>
            <person name="Bult C."/>
            <person name="Grimmond S.M."/>
            <person name="Teasdale R.D."/>
            <person name="Liu E.T."/>
            <person name="Brusic V."/>
            <person name="Quackenbush J."/>
            <person name="Wahlestedt C."/>
            <person name="Mattick J.S."/>
            <person name="Hume D.A."/>
            <person name="Kai C."/>
            <person name="Sasaki D."/>
            <person name="Tomaru Y."/>
            <person name="Fukuda S."/>
            <person name="Kanamori-Katayama M."/>
            <person name="Suzuki M."/>
            <person name="Aoki J."/>
            <person name="Arakawa T."/>
            <person name="Iida J."/>
            <person name="Imamura K."/>
            <person name="Itoh M."/>
            <person name="Kato T."/>
            <person name="Kawaji H."/>
            <person name="Kawagashira N."/>
            <person name="Kawashima T."/>
            <person name="Kojima M."/>
            <person name="Kondo S."/>
            <person name="Konno H."/>
            <person name="Nakano K."/>
            <person name="Ninomiya N."/>
            <person name="Nishio T."/>
            <person name="Okada M."/>
            <person name="Plessy C."/>
            <person name="Shibata K."/>
            <person name="Shiraki T."/>
            <person name="Suzuki S."/>
            <person name="Tagami M."/>
            <person name="Waki K."/>
            <person name="Watahiki A."/>
            <person name="Okamura-Oho Y."/>
            <person name="Suzuki H."/>
            <person name="Kawai J."/>
            <person name="Hayashizaki Y."/>
        </authorList>
    </citation>
    <scope>NUCLEOTIDE SEQUENCE [LARGE SCALE MRNA] OF 1-316 (ISOFORMS 1/4/5)</scope>
    <source>
        <strain>C57BL/6J</strain>
        <tissue>Embryonic head</tissue>
    </source>
</reference>
<reference key="7">
    <citation type="journal article" date="2007" name="Proc. Natl. Acad. Sci. U.S.A.">
        <title>Large-scale phosphorylation analysis of mouse liver.</title>
        <authorList>
            <person name="Villen J."/>
            <person name="Beausoleil S.A."/>
            <person name="Gerber S.A."/>
            <person name="Gygi S.P."/>
        </authorList>
    </citation>
    <scope>PHOSPHORYLATION [LARGE SCALE ANALYSIS] AT SER-407 AND SER-410</scope>
    <scope>IDENTIFICATION BY MASS SPECTROMETRY [LARGE SCALE ANALYSIS]</scope>
    <source>
        <tissue>Liver</tissue>
    </source>
</reference>
<reference key="8">
    <citation type="journal article" date="2010" name="Cell">
        <title>A tissue-specific atlas of mouse protein phosphorylation and expression.</title>
        <authorList>
            <person name="Huttlin E.L."/>
            <person name="Jedrychowski M.P."/>
            <person name="Elias J.E."/>
            <person name="Goswami T."/>
            <person name="Rad R."/>
            <person name="Beausoleil S.A."/>
            <person name="Villen J."/>
            <person name="Haas W."/>
            <person name="Sowa M.E."/>
            <person name="Gygi S.P."/>
        </authorList>
    </citation>
    <scope>PHOSPHORYLATION [LARGE SCALE ANALYSIS] AT SER-407; THR-408 AND SER-410</scope>
    <scope>IDENTIFICATION BY MASS SPECTROMETRY [LARGE SCALE ANALYSIS]</scope>
    <source>
        <tissue>Brain</tissue>
        <tissue>Brown adipose tissue</tissue>
        <tissue>Heart</tissue>
        <tissue>Kidney</tissue>
        <tissue>Liver</tissue>
        <tissue>Lung</tissue>
        <tissue>Pancreas</tissue>
        <tissue>Spleen</tissue>
        <tissue>Testis</tissue>
    </source>
</reference>
<reference key="9">
    <citation type="journal article" date="2012" name="FEBS Lett.">
        <title>Physical and functional interaction of KV10.1 with Rabaptin-5 impacts ion channel trafficking.</title>
        <authorList>
            <person name="Ninkovic M."/>
            <person name="Mitkovski M."/>
            <person name="Kohl T."/>
            <person name="Stuhmer W."/>
            <person name="Pardo L.A."/>
        </authorList>
    </citation>
    <scope>INTERACTION WITH KCNH1</scope>
</reference>
<reference key="10">
    <citation type="journal article" date="2014" name="Nat. Commun.">
        <title>Ciliary membrane proteins traffic through the Golgi via a Rabep1/GGA1/Arl3-dependent mechanism.</title>
        <authorList>
            <person name="Kim H."/>
            <person name="Xu H."/>
            <person name="Yao Q."/>
            <person name="Li W."/>
            <person name="Huang Q."/>
            <person name="Outeda P."/>
            <person name="Cebotaru V."/>
            <person name="Chiaravalli M."/>
            <person name="Boletta A."/>
            <person name="Piontek K."/>
            <person name="Germino G.G."/>
            <person name="Weinman E.J."/>
            <person name="Watnick T."/>
            <person name="Qian F."/>
        </authorList>
    </citation>
    <scope>SUBCELLULAR LOCATION</scope>
    <scope>INTERACTION WITH PKD1 AND GGA1</scope>
</reference>
<comment type="function">
    <text evidence="3 7">Rab effector protein acting as linker between gamma-adaptin, RAB4A and RAB5A. Involved in endocytic membrane fusion and membrane trafficking of recycling endosomes. Involved in KCNH1 channels trafficking to and from the cell membrane. Stimulates RABGEF1 mediated nucleotide exchange on RAB5A. Mediates the traffic of PKD1:PKD2 complex from the endoplasmic reticulum through the Golgi to the cilium (PubMed:25405894).</text>
</comment>
<comment type="subunit">
    <text evidence="2 3 6 7">Heterodimer with RABGEF1. The heterodimer binds RAB4A and RAB5A that have been activated by GTP-binding. Interacts with TSC2 (By similarity). Interacts with GGA1 (via GAE domain), GGA2 (via GAE domain) and GGA3 (via GAE domain) (By similarity). Interacts with AP1G1 (via GAE domain) (By similarity). Interacts with AP1G2 (via GAE domain) (By similarity). Interacts with ECPAS (By similarity). Interacts with KCNH1 (PubMed:22841712). Interacts with PKD1 (via C-terminal domain) and GGA1; the interactions recruit PKD1:PKD2 complex to GGA1 and ARL3 at trans-Golgi network (PubMed:25405894). Interacts with KCNH1 (By similarity).</text>
</comment>
<comment type="subcellular location">
    <subcellularLocation>
        <location evidence="1">Cytoplasm</location>
    </subcellularLocation>
    <subcellularLocation>
        <location evidence="1">Early endosome</location>
    </subcellularLocation>
    <subcellularLocation>
        <location evidence="1">Recycling endosome</location>
    </subcellularLocation>
    <subcellularLocation>
        <location evidence="1">Cytoplasmic vesicle</location>
    </subcellularLocation>
</comment>
<comment type="alternative products">
    <event type="alternative splicing"/>
    <isoform>
        <id>O35551-1</id>
        <name>1</name>
        <name>Rabaptin-5</name>
        <sequence type="displayed"/>
    </isoform>
    <isoform>
        <id>O35551-2</id>
        <name>2</name>
        <name>Rabaptin-5gamma</name>
        <sequence type="described" ref="VSP_010452"/>
    </isoform>
    <isoform>
        <id>O35551-3</id>
        <name>3</name>
        <name>Rabaptin-5delta</name>
        <sequence type="described" ref="VSP_010453"/>
    </isoform>
    <isoform>
        <id>O35551-4</id>
        <name>4</name>
        <sequence type="described" ref="VSP_010454 VSP_010455"/>
    </isoform>
    <isoform>
        <id>O35551-5</id>
        <name>5</name>
        <sequence type="described" ref="VSP_010456 VSP_010457"/>
    </isoform>
    <isoform>
        <id>O35551-6</id>
        <name>6</name>
        <sequence type="described" ref="VSP_025444"/>
    </isoform>
</comment>
<comment type="PTM">
    <text evidence="1">Proteolytic cleavage by caspases in apoptotic cells causes loss of endosome fusion activity.</text>
</comment>
<comment type="miscellaneous">
    <molecule>Isoform 5</molecule>
    <text evidence="10">May be due to an intron retention.</text>
</comment>
<comment type="similarity">
    <text evidence="10">Belongs to the rabaptin family.</text>
</comment>
<comment type="sequence caution" evidence="10">
    <conflict type="erroneous initiation">
        <sequence resource="EMBL-CDS" id="AAH03921"/>
    </conflict>
    <text>Extended N-terminus.</text>
</comment>
<dbReference type="EMBL" id="D86066">
    <property type="protein sequence ID" value="BAA21783.1"/>
    <property type="molecule type" value="mRNA"/>
</dbReference>
<dbReference type="EMBL" id="AB001750">
    <property type="protein sequence ID" value="BAA23818.1"/>
    <property type="molecule type" value="mRNA"/>
</dbReference>
<dbReference type="EMBL" id="AF248489">
    <property type="protein sequence ID" value="AAF78238.1"/>
    <property type="molecule type" value="mRNA"/>
</dbReference>
<dbReference type="EMBL" id="AF248490">
    <property type="protein sequence ID" value="AAG44544.1"/>
    <property type="molecule type" value="mRNA"/>
</dbReference>
<dbReference type="EMBL" id="AL596136">
    <property type="status" value="NOT_ANNOTATED_CDS"/>
    <property type="molecule type" value="Genomic_DNA"/>
</dbReference>
<dbReference type="EMBL" id="CR933735">
    <property type="status" value="NOT_ANNOTATED_CDS"/>
    <property type="molecule type" value="Genomic_DNA"/>
</dbReference>
<dbReference type="EMBL" id="CR936845">
    <property type="status" value="NOT_ANNOTATED_CDS"/>
    <property type="molecule type" value="Genomic_DNA"/>
</dbReference>
<dbReference type="EMBL" id="CH466596">
    <property type="protein sequence ID" value="EDL12625.1"/>
    <property type="molecule type" value="Genomic_DNA"/>
</dbReference>
<dbReference type="EMBL" id="BC129854">
    <property type="protein sequence ID" value="AAI29855.1"/>
    <property type="molecule type" value="mRNA"/>
</dbReference>
<dbReference type="EMBL" id="BC003921">
    <property type="protein sequence ID" value="AAH03921.1"/>
    <property type="status" value="ALT_INIT"/>
    <property type="molecule type" value="mRNA"/>
</dbReference>
<dbReference type="EMBL" id="BC060166">
    <property type="protein sequence ID" value="AAH60166.1"/>
    <property type="molecule type" value="mRNA"/>
</dbReference>
<dbReference type="EMBL" id="BC129853">
    <property type="protein sequence ID" value="AAI29854.1"/>
    <property type="molecule type" value="mRNA"/>
</dbReference>
<dbReference type="EMBL" id="AK019413">
    <property type="protein sequence ID" value="BAB31710.3"/>
    <property type="molecule type" value="mRNA"/>
</dbReference>
<dbReference type="CCDS" id="CCDS24968.1">
    <molecule id="O35551-1"/>
</dbReference>
<dbReference type="CCDS" id="CCDS70232.1">
    <molecule id="O35551-2"/>
</dbReference>
<dbReference type="CCDS" id="CCDS78984.1">
    <molecule id="O35551-3"/>
</dbReference>
<dbReference type="RefSeq" id="NP_001278070.1">
    <molecule id="O35551-2"/>
    <property type="nucleotide sequence ID" value="NM_001291141.1"/>
</dbReference>
<dbReference type="RefSeq" id="NP_001278071.1">
    <molecule id="O35551-3"/>
    <property type="nucleotide sequence ID" value="NM_001291142.1"/>
</dbReference>
<dbReference type="RefSeq" id="NP_001278072.1">
    <property type="nucleotide sequence ID" value="NM_001291143.1"/>
</dbReference>
<dbReference type="RefSeq" id="NP_062273.2">
    <molecule id="O35551-1"/>
    <property type="nucleotide sequence ID" value="NM_019400.3"/>
</dbReference>
<dbReference type="SMR" id="O35551"/>
<dbReference type="BioGRID" id="207592">
    <property type="interactions" value="18"/>
</dbReference>
<dbReference type="CORUM" id="O35551"/>
<dbReference type="FunCoup" id="O35551">
    <property type="interactions" value="3028"/>
</dbReference>
<dbReference type="IntAct" id="O35551">
    <property type="interactions" value="5"/>
</dbReference>
<dbReference type="MINT" id="O35551"/>
<dbReference type="STRING" id="10090.ENSMUSP00000075619"/>
<dbReference type="GlyGen" id="O35551">
    <property type="glycosylation" value="1 site, 1 N-linked glycan (1 site)"/>
</dbReference>
<dbReference type="iPTMnet" id="O35551"/>
<dbReference type="PhosphoSitePlus" id="O35551"/>
<dbReference type="SwissPalm" id="O35551"/>
<dbReference type="jPOST" id="O35551"/>
<dbReference type="PaxDb" id="10090-ENSMUSP00000075619"/>
<dbReference type="PeptideAtlas" id="O35551"/>
<dbReference type="ProteomicsDB" id="253157">
    <molecule id="O35551-1"/>
</dbReference>
<dbReference type="ProteomicsDB" id="253158">
    <molecule id="O35551-2"/>
</dbReference>
<dbReference type="ProteomicsDB" id="253159">
    <molecule id="O35551-3"/>
</dbReference>
<dbReference type="ProteomicsDB" id="253160">
    <molecule id="O35551-4"/>
</dbReference>
<dbReference type="ProteomicsDB" id="253161">
    <molecule id="O35551-5"/>
</dbReference>
<dbReference type="ProteomicsDB" id="253162">
    <molecule id="O35551-6"/>
</dbReference>
<dbReference type="Pumba" id="O35551"/>
<dbReference type="Antibodypedia" id="3875">
    <property type="antibodies" value="118 antibodies from 27 providers"/>
</dbReference>
<dbReference type="DNASU" id="54189"/>
<dbReference type="Ensembl" id="ENSMUST00000076270.13">
    <molecule id="O35551-1"/>
    <property type="protein sequence ID" value="ENSMUSP00000075619.7"/>
    <property type="gene ID" value="ENSMUSG00000020817.17"/>
</dbReference>
<dbReference type="Ensembl" id="ENSMUST00000081362.13">
    <molecule id="O35551-3"/>
    <property type="protein sequence ID" value="ENSMUSP00000080102.7"/>
    <property type="gene ID" value="ENSMUSG00000020817.17"/>
</dbReference>
<dbReference type="Ensembl" id="ENSMUST00000100928.11">
    <molecule id="O35551-5"/>
    <property type="protein sequence ID" value="ENSMUSP00000098488.5"/>
    <property type="gene ID" value="ENSMUSG00000020817.17"/>
</dbReference>
<dbReference type="Ensembl" id="ENSMUST00000108533.10">
    <molecule id="O35551-6"/>
    <property type="protein sequence ID" value="ENSMUSP00000104173.4"/>
    <property type="gene ID" value="ENSMUSG00000020817.17"/>
</dbReference>
<dbReference type="Ensembl" id="ENSMUST00000178245.2">
    <molecule id="O35551-2"/>
    <property type="protein sequence ID" value="ENSMUSP00000137267.2"/>
    <property type="gene ID" value="ENSMUSG00000020817.17"/>
</dbReference>
<dbReference type="GeneID" id="54189"/>
<dbReference type="KEGG" id="mmu:54189"/>
<dbReference type="UCSC" id="uc007jwr.3">
    <molecule id="O35551-1"/>
    <property type="organism name" value="mouse"/>
</dbReference>
<dbReference type="UCSC" id="uc007jwt.3">
    <molecule id="O35551-2"/>
    <property type="organism name" value="mouse"/>
</dbReference>
<dbReference type="UCSC" id="uc007jwu.1">
    <molecule id="O35551-5"/>
    <property type="organism name" value="mouse"/>
</dbReference>
<dbReference type="UCSC" id="uc011xyb.2">
    <molecule id="O35551-3"/>
    <property type="organism name" value="mouse"/>
</dbReference>
<dbReference type="AGR" id="MGI:1860236"/>
<dbReference type="CTD" id="9135"/>
<dbReference type="MGI" id="MGI:1860236">
    <property type="gene designation" value="Rabep1"/>
</dbReference>
<dbReference type="VEuPathDB" id="HostDB:ENSMUSG00000020817"/>
<dbReference type="eggNOG" id="KOG0993">
    <property type="taxonomic scope" value="Eukaryota"/>
</dbReference>
<dbReference type="GeneTree" id="ENSGT00530000063743"/>
<dbReference type="InParanoid" id="O35551"/>
<dbReference type="OMA" id="XDLKRQN"/>
<dbReference type="OrthoDB" id="54868at9989"/>
<dbReference type="TreeFam" id="TF329365"/>
<dbReference type="BioGRID-ORCS" id="54189">
    <property type="hits" value="2 hits in 79 CRISPR screens"/>
</dbReference>
<dbReference type="ChiTaRS" id="Rabep1">
    <property type="organism name" value="mouse"/>
</dbReference>
<dbReference type="PRO" id="PR:O35551"/>
<dbReference type="Proteomes" id="UP000000589">
    <property type="component" value="Chromosome 11"/>
</dbReference>
<dbReference type="RNAct" id="O35551">
    <property type="molecule type" value="protein"/>
</dbReference>
<dbReference type="Bgee" id="ENSMUSG00000020817">
    <property type="expression patterns" value="Expressed in dentate gyrus of hippocampal formation granule cell and 264 other cell types or tissues"/>
</dbReference>
<dbReference type="ExpressionAtlas" id="O35551">
    <property type="expression patterns" value="baseline and differential"/>
</dbReference>
<dbReference type="GO" id="GO:0005829">
    <property type="term" value="C:cytosol"/>
    <property type="evidence" value="ECO:0007669"/>
    <property type="project" value="Ensembl"/>
</dbReference>
<dbReference type="GO" id="GO:0005769">
    <property type="term" value="C:early endosome"/>
    <property type="evidence" value="ECO:0007669"/>
    <property type="project" value="UniProtKB-SubCell"/>
</dbReference>
<dbReference type="GO" id="GO:0030139">
    <property type="term" value="C:endocytic vesicle"/>
    <property type="evidence" value="ECO:0000250"/>
    <property type="project" value="UniProtKB"/>
</dbReference>
<dbReference type="GO" id="GO:0005768">
    <property type="term" value="C:endosome"/>
    <property type="evidence" value="ECO:0000314"/>
    <property type="project" value="MGI"/>
</dbReference>
<dbReference type="GO" id="GO:0098978">
    <property type="term" value="C:glutamatergic synapse"/>
    <property type="evidence" value="ECO:0000314"/>
    <property type="project" value="SynGO"/>
</dbReference>
<dbReference type="GO" id="GO:0032991">
    <property type="term" value="C:protein-containing complex"/>
    <property type="evidence" value="ECO:0007669"/>
    <property type="project" value="Ensembl"/>
</dbReference>
<dbReference type="GO" id="GO:0055037">
    <property type="term" value="C:recycling endosome"/>
    <property type="evidence" value="ECO:0007669"/>
    <property type="project" value="UniProtKB-SubCell"/>
</dbReference>
<dbReference type="GO" id="GO:0008083">
    <property type="term" value="F:growth factor activity"/>
    <property type="evidence" value="ECO:0007669"/>
    <property type="project" value="InterPro"/>
</dbReference>
<dbReference type="GO" id="GO:0005096">
    <property type="term" value="F:GTPase activator activity"/>
    <property type="evidence" value="ECO:0007669"/>
    <property type="project" value="InterPro"/>
</dbReference>
<dbReference type="GO" id="GO:0019904">
    <property type="term" value="F:protein domain specific binding"/>
    <property type="evidence" value="ECO:0007669"/>
    <property type="project" value="Ensembl"/>
</dbReference>
<dbReference type="GO" id="GO:0042803">
    <property type="term" value="F:protein homodimerization activity"/>
    <property type="evidence" value="ECO:0007669"/>
    <property type="project" value="Ensembl"/>
</dbReference>
<dbReference type="GO" id="GO:0006915">
    <property type="term" value="P:apoptotic process"/>
    <property type="evidence" value="ECO:0007669"/>
    <property type="project" value="UniProtKB-KW"/>
</dbReference>
<dbReference type="GO" id="GO:0006897">
    <property type="term" value="P:endocytosis"/>
    <property type="evidence" value="ECO:0007669"/>
    <property type="project" value="UniProtKB-KW"/>
</dbReference>
<dbReference type="GO" id="GO:0006893">
    <property type="term" value="P:Golgi to plasma membrane transport"/>
    <property type="evidence" value="ECO:0000315"/>
    <property type="project" value="UniProtKB"/>
</dbReference>
<dbReference type="GO" id="GO:1903441">
    <property type="term" value="P:protein localization to ciliary membrane"/>
    <property type="evidence" value="ECO:0000315"/>
    <property type="project" value="UniProtKB"/>
</dbReference>
<dbReference type="GO" id="GO:0015031">
    <property type="term" value="P:protein transport"/>
    <property type="evidence" value="ECO:0007669"/>
    <property type="project" value="UniProtKB-KW"/>
</dbReference>
<dbReference type="GO" id="GO:0099149">
    <property type="term" value="P:regulation of postsynaptic neurotransmitter receptor internalization"/>
    <property type="evidence" value="ECO:0000314"/>
    <property type="project" value="SynGO"/>
</dbReference>
<dbReference type="GO" id="GO:0016192">
    <property type="term" value="P:vesicle-mediated transport"/>
    <property type="evidence" value="ECO:0000250"/>
    <property type="project" value="UniProtKB"/>
</dbReference>
<dbReference type="FunFam" id="1.20.5.340:FF:000022">
    <property type="entry name" value="Rabaptin, RAB GTPase-binding effector protein 1"/>
    <property type="match status" value="1"/>
</dbReference>
<dbReference type="FunFam" id="1.20.5.730:FF:000002">
    <property type="entry name" value="Rabaptin, RAB GTPase-binding effector protein 1"/>
    <property type="match status" value="1"/>
</dbReference>
<dbReference type="Gene3D" id="1.20.5.340">
    <property type="match status" value="1"/>
</dbReference>
<dbReference type="Gene3D" id="1.20.5.730">
    <property type="entry name" value="Single helix bin"/>
    <property type="match status" value="1"/>
</dbReference>
<dbReference type="InterPro" id="IPR003914">
    <property type="entry name" value="Rabaptin"/>
</dbReference>
<dbReference type="InterPro" id="IPR018514">
    <property type="entry name" value="Rabaptin_coiled-coil"/>
</dbReference>
<dbReference type="InterPro" id="IPR015390">
    <property type="entry name" value="Rabaptin_Rab5-bd_dom"/>
</dbReference>
<dbReference type="PANTHER" id="PTHR31179">
    <property type="entry name" value="RAB GTPASE-BINDING EFFECTOR PROTEIN"/>
    <property type="match status" value="1"/>
</dbReference>
<dbReference type="PANTHER" id="PTHR31179:SF5">
    <property type="entry name" value="RAB GTPASE-BINDING EFFECTOR PROTEIN 1"/>
    <property type="match status" value="1"/>
</dbReference>
<dbReference type="Pfam" id="PF09311">
    <property type="entry name" value="Rab5-bind"/>
    <property type="match status" value="1"/>
</dbReference>
<dbReference type="Pfam" id="PF03528">
    <property type="entry name" value="Rabaptin"/>
    <property type="match status" value="1"/>
</dbReference>
<dbReference type="PRINTS" id="PR01432">
    <property type="entry name" value="RABAPTIN"/>
</dbReference>
<dbReference type="SUPFAM" id="SSF103652">
    <property type="entry name" value="G protein-binding domain"/>
    <property type="match status" value="2"/>
</dbReference>
<keyword id="KW-0007">Acetylation</keyword>
<keyword id="KW-0025">Alternative splicing</keyword>
<keyword id="KW-0053">Apoptosis</keyword>
<keyword id="KW-0175">Coiled coil</keyword>
<keyword id="KW-0963">Cytoplasm</keyword>
<keyword id="KW-0968">Cytoplasmic vesicle</keyword>
<keyword id="KW-0254">Endocytosis</keyword>
<keyword id="KW-0967">Endosome</keyword>
<keyword id="KW-0597">Phosphoprotein</keyword>
<keyword id="KW-0653">Protein transport</keyword>
<keyword id="KW-1185">Reference proteome</keyword>
<keyword id="KW-0813">Transport</keyword>
<proteinExistence type="evidence at protein level"/>
<name>RABE1_MOUSE</name>
<gene>
    <name type="primary">Rabep1</name>
    <name type="synonym">Rab5ep</name>
    <name type="synonym">Rabpt5</name>
    <name type="synonym">Rabpt5a</name>
</gene>
<evidence type="ECO:0000250" key="1"/>
<evidence type="ECO:0000250" key="2">
    <source>
        <dbReference type="UniProtKB" id="O35550"/>
    </source>
</evidence>
<evidence type="ECO:0000250" key="3">
    <source>
        <dbReference type="UniProtKB" id="Q15276"/>
    </source>
</evidence>
<evidence type="ECO:0000255" key="4"/>
<evidence type="ECO:0000256" key="5">
    <source>
        <dbReference type="SAM" id="MobiDB-lite"/>
    </source>
</evidence>
<evidence type="ECO:0000269" key="6">
    <source>
    </source>
</evidence>
<evidence type="ECO:0000269" key="7">
    <source>
    </source>
</evidence>
<evidence type="ECO:0000303" key="8">
    <source>
    </source>
</evidence>
<evidence type="ECO:0000303" key="9">
    <source>
    </source>
</evidence>
<evidence type="ECO:0000305" key="10"/>
<evidence type="ECO:0007744" key="11">
    <source>
    </source>
</evidence>
<evidence type="ECO:0007744" key="12">
    <source>
    </source>
</evidence>
<feature type="initiator methionine" description="Removed" evidence="3">
    <location>
        <position position="1"/>
    </location>
</feature>
<feature type="chain" id="PRO_0000187557" description="Rab GTPase-binding effector protein 1">
    <location>
        <begin position="2"/>
        <end position="862"/>
    </location>
</feature>
<feature type="region of interest" description="Disordered" evidence="5">
    <location>
        <begin position="315"/>
        <end position="374"/>
    </location>
</feature>
<feature type="coiled-coil region" evidence="4">
    <location>
        <begin position="11"/>
        <end position="345"/>
    </location>
</feature>
<feature type="coiled-coil region" evidence="4">
    <location>
        <begin position="534"/>
        <end position="816"/>
    </location>
</feature>
<feature type="compositionally biased region" description="Basic and acidic residues" evidence="5">
    <location>
        <begin position="336"/>
        <end position="345"/>
    </location>
</feature>
<feature type="modified residue" description="N-acetylalanine" evidence="3">
    <location>
        <position position="2"/>
    </location>
</feature>
<feature type="modified residue" description="N6-acetyllysine" evidence="3">
    <location>
        <position position="282"/>
    </location>
</feature>
<feature type="modified residue" description="Phosphoserine" evidence="3">
    <location>
        <position position="374"/>
    </location>
</feature>
<feature type="modified residue" description="Phosphoserine" evidence="3">
    <location>
        <position position="377"/>
    </location>
</feature>
<feature type="modified residue" description="Phosphoserine" evidence="11 12">
    <location>
        <position position="407"/>
    </location>
</feature>
<feature type="modified residue" description="Phosphothreonine" evidence="12">
    <location>
        <position position="408"/>
    </location>
</feature>
<feature type="modified residue" description="Phosphoserine" evidence="11 12">
    <location>
        <position position="410"/>
    </location>
</feature>
<feature type="splice variant" id="VSP_010452" description="In isoform 2." evidence="8">
    <original>MAQPGPAPQPDVSLQQRVAELEKINAEFLRAQQQLEQEFNQKRAKFKELYLAKE</original>
    <variation>MAQPGPAPQPD</variation>
    <location>
        <begin position="1"/>
        <end position="54"/>
    </location>
</feature>
<feature type="splice variant" id="VSP_010453" description="In isoform 3." evidence="8">
    <location>
        <begin position="176"/>
        <end position="215"/>
    </location>
</feature>
<feature type="splice variant" id="VSP_010454" description="In isoform 4." evidence="9">
    <original>EH</original>
    <variation>VK</variation>
    <location>
        <begin position="366"/>
        <end position="367"/>
    </location>
</feature>
<feature type="splice variant" id="VSP_010455" description="In isoform 4." evidence="9">
    <location>
        <begin position="368"/>
        <end position="862"/>
    </location>
</feature>
<feature type="splice variant" id="VSP_010456" description="In isoform 5." evidence="9">
    <location>
        <begin position="522"/>
        <end position="556"/>
    </location>
</feature>
<feature type="splice variant" id="VSP_025444" description="In isoform 6." evidence="9">
    <original>I</original>
    <variation>IVL</variation>
    <location>
        <position position="738"/>
    </location>
</feature>
<feature type="splice variant" id="VSP_010457" description="In isoform 5." evidence="9">
    <original>QLERIRQADSLERIRAILNDTKLTDINQLPET</original>
    <variation>RCLGNHHGPSVGGGTNVAGGLGSPLSLPQIFA</variation>
    <location>
        <begin position="831"/>
        <end position="862"/>
    </location>
</feature>
<feature type="sequence conflict" description="In Ref. 6; BAB31710." evidence="10" ref="6">
    <original>Q</original>
    <variation>K</variation>
    <location>
        <position position="68"/>
    </location>
</feature>
<feature type="sequence conflict" description="In Ref. 1; BAA23818/BAA21783 and 2; AAF78238/AAG44544." evidence="10" ref="1 2">
    <original>Q</original>
    <variation>R</variation>
    <location>
        <position position="805"/>
    </location>
</feature>
<accession>O35551</accession>
<accession>A1L322</accession>
<accession>Q5QNU3</accession>
<accession>Q99L08</accession>
<accession>Q9CRP3</accession>
<accession>Q9EQF9</accession>
<accession>Q9JI94</accession>
<organism>
    <name type="scientific">Mus musculus</name>
    <name type="common">Mouse</name>
    <dbReference type="NCBI Taxonomy" id="10090"/>
    <lineage>
        <taxon>Eukaryota</taxon>
        <taxon>Metazoa</taxon>
        <taxon>Chordata</taxon>
        <taxon>Craniata</taxon>
        <taxon>Vertebrata</taxon>
        <taxon>Euteleostomi</taxon>
        <taxon>Mammalia</taxon>
        <taxon>Eutheria</taxon>
        <taxon>Euarchontoglires</taxon>
        <taxon>Glires</taxon>
        <taxon>Rodentia</taxon>
        <taxon>Myomorpha</taxon>
        <taxon>Muroidea</taxon>
        <taxon>Muridae</taxon>
        <taxon>Murinae</taxon>
        <taxon>Mus</taxon>
        <taxon>Mus</taxon>
    </lineage>
</organism>